<proteinExistence type="inferred from homology"/>
<organism>
    <name type="scientific">Shewanella amazonensis (strain ATCC BAA-1098 / SB2B)</name>
    <dbReference type="NCBI Taxonomy" id="326297"/>
    <lineage>
        <taxon>Bacteria</taxon>
        <taxon>Pseudomonadati</taxon>
        <taxon>Pseudomonadota</taxon>
        <taxon>Gammaproteobacteria</taxon>
        <taxon>Alteromonadales</taxon>
        <taxon>Shewanellaceae</taxon>
        <taxon>Shewanella</taxon>
    </lineage>
</organism>
<accession>A1S227</accession>
<keyword id="KW-1185">Reference proteome</keyword>
<keyword id="KW-0687">Ribonucleoprotein</keyword>
<keyword id="KW-0689">Ribosomal protein</keyword>
<keyword id="KW-0694">RNA-binding</keyword>
<keyword id="KW-0699">rRNA-binding</keyword>
<comment type="function">
    <text evidence="1">One of the primary rRNA binding proteins, it binds specifically to the 5'-end of 16S ribosomal RNA.</text>
</comment>
<comment type="subunit">
    <text evidence="1">Part of the 30S ribosomal subunit.</text>
</comment>
<comment type="similarity">
    <text evidence="1">Belongs to the universal ribosomal protein uS17 family.</text>
</comment>
<dbReference type="EMBL" id="CP000507">
    <property type="protein sequence ID" value="ABL98433.1"/>
    <property type="molecule type" value="Genomic_DNA"/>
</dbReference>
<dbReference type="RefSeq" id="WP_011758343.1">
    <property type="nucleotide sequence ID" value="NC_008700.1"/>
</dbReference>
<dbReference type="SMR" id="A1S227"/>
<dbReference type="STRING" id="326297.Sama_0222"/>
<dbReference type="KEGG" id="saz:Sama_0222"/>
<dbReference type="eggNOG" id="COG0186">
    <property type="taxonomic scope" value="Bacteria"/>
</dbReference>
<dbReference type="HOGENOM" id="CLU_073626_1_1_6"/>
<dbReference type="OrthoDB" id="9811714at2"/>
<dbReference type="Proteomes" id="UP000009175">
    <property type="component" value="Chromosome"/>
</dbReference>
<dbReference type="GO" id="GO:0022627">
    <property type="term" value="C:cytosolic small ribosomal subunit"/>
    <property type="evidence" value="ECO:0007669"/>
    <property type="project" value="TreeGrafter"/>
</dbReference>
<dbReference type="GO" id="GO:0019843">
    <property type="term" value="F:rRNA binding"/>
    <property type="evidence" value="ECO:0007669"/>
    <property type="project" value="UniProtKB-UniRule"/>
</dbReference>
<dbReference type="GO" id="GO:0003735">
    <property type="term" value="F:structural constituent of ribosome"/>
    <property type="evidence" value="ECO:0007669"/>
    <property type="project" value="InterPro"/>
</dbReference>
<dbReference type="GO" id="GO:0006412">
    <property type="term" value="P:translation"/>
    <property type="evidence" value="ECO:0007669"/>
    <property type="project" value="UniProtKB-UniRule"/>
</dbReference>
<dbReference type="CDD" id="cd00364">
    <property type="entry name" value="Ribosomal_uS17"/>
    <property type="match status" value="1"/>
</dbReference>
<dbReference type="FunFam" id="2.40.50.140:FF:000014">
    <property type="entry name" value="30S ribosomal protein S17"/>
    <property type="match status" value="1"/>
</dbReference>
<dbReference type="Gene3D" id="2.40.50.140">
    <property type="entry name" value="Nucleic acid-binding proteins"/>
    <property type="match status" value="1"/>
</dbReference>
<dbReference type="HAMAP" id="MF_01345_B">
    <property type="entry name" value="Ribosomal_uS17_B"/>
    <property type="match status" value="1"/>
</dbReference>
<dbReference type="InterPro" id="IPR012340">
    <property type="entry name" value="NA-bd_OB-fold"/>
</dbReference>
<dbReference type="InterPro" id="IPR000266">
    <property type="entry name" value="Ribosomal_uS17"/>
</dbReference>
<dbReference type="InterPro" id="IPR019984">
    <property type="entry name" value="Ribosomal_uS17_bact/chlr"/>
</dbReference>
<dbReference type="InterPro" id="IPR019979">
    <property type="entry name" value="Ribosomal_uS17_CS"/>
</dbReference>
<dbReference type="NCBIfam" id="NF004123">
    <property type="entry name" value="PRK05610.1"/>
    <property type="match status" value="1"/>
</dbReference>
<dbReference type="NCBIfam" id="TIGR03635">
    <property type="entry name" value="uS17_bact"/>
    <property type="match status" value="1"/>
</dbReference>
<dbReference type="PANTHER" id="PTHR10744">
    <property type="entry name" value="40S RIBOSOMAL PROTEIN S11 FAMILY MEMBER"/>
    <property type="match status" value="1"/>
</dbReference>
<dbReference type="PANTHER" id="PTHR10744:SF1">
    <property type="entry name" value="SMALL RIBOSOMAL SUBUNIT PROTEIN US17M"/>
    <property type="match status" value="1"/>
</dbReference>
<dbReference type="Pfam" id="PF00366">
    <property type="entry name" value="Ribosomal_S17"/>
    <property type="match status" value="1"/>
</dbReference>
<dbReference type="PRINTS" id="PR00973">
    <property type="entry name" value="RIBOSOMALS17"/>
</dbReference>
<dbReference type="SUPFAM" id="SSF50249">
    <property type="entry name" value="Nucleic acid-binding proteins"/>
    <property type="match status" value="1"/>
</dbReference>
<dbReference type="PROSITE" id="PS00056">
    <property type="entry name" value="RIBOSOMAL_S17"/>
    <property type="match status" value="1"/>
</dbReference>
<gene>
    <name evidence="1" type="primary">rpsQ</name>
    <name type="ordered locus">Sama_0222</name>
</gene>
<name>RS17_SHEAM</name>
<reference key="1">
    <citation type="submission" date="2006-12" db="EMBL/GenBank/DDBJ databases">
        <title>Complete sequence of Shewanella amazonensis SB2B.</title>
        <authorList>
            <consortium name="US DOE Joint Genome Institute"/>
            <person name="Copeland A."/>
            <person name="Lucas S."/>
            <person name="Lapidus A."/>
            <person name="Barry K."/>
            <person name="Detter J.C."/>
            <person name="Glavina del Rio T."/>
            <person name="Hammon N."/>
            <person name="Israni S."/>
            <person name="Dalin E."/>
            <person name="Tice H."/>
            <person name="Pitluck S."/>
            <person name="Munk A.C."/>
            <person name="Brettin T."/>
            <person name="Bruce D."/>
            <person name="Han C."/>
            <person name="Tapia R."/>
            <person name="Gilna P."/>
            <person name="Schmutz J."/>
            <person name="Larimer F."/>
            <person name="Land M."/>
            <person name="Hauser L."/>
            <person name="Kyrpides N."/>
            <person name="Mikhailova N."/>
            <person name="Fredrickson J."/>
            <person name="Richardson P."/>
        </authorList>
    </citation>
    <scope>NUCLEOTIDE SEQUENCE [LARGE SCALE GENOMIC DNA]</scope>
    <source>
        <strain>ATCC BAA-1098 / SB2B</strain>
    </source>
</reference>
<evidence type="ECO:0000255" key="1">
    <source>
        <dbReference type="HAMAP-Rule" id="MF_01345"/>
    </source>
</evidence>
<evidence type="ECO:0000305" key="2"/>
<protein>
    <recommendedName>
        <fullName evidence="1">Small ribosomal subunit protein uS17</fullName>
    </recommendedName>
    <alternativeName>
        <fullName evidence="2">30S ribosomal protein S17</fullName>
    </alternativeName>
</protein>
<feature type="chain" id="PRO_1000055015" description="Small ribosomal subunit protein uS17">
    <location>
        <begin position="1"/>
        <end position="82"/>
    </location>
</feature>
<sequence>MSDKIRTLQGRVTSNKMDKSITVAVERLVKHPIYGKFIKRTTKIHAHDELNQCNEGDIVTIRECRPLSKTKSWTLVDVVSKA</sequence>